<gene>
    <name evidence="1" type="primary">rplS</name>
    <name type="ordered locus">CKO_03929</name>
</gene>
<feature type="chain" id="PRO_1000049658" description="Large ribosomal subunit protein bL19">
    <location>
        <begin position="1"/>
        <end position="115"/>
    </location>
</feature>
<comment type="function">
    <text evidence="1">This protein is located at the 30S-50S ribosomal subunit interface and may play a role in the structure and function of the aminoacyl-tRNA binding site.</text>
</comment>
<comment type="similarity">
    <text evidence="1">Belongs to the bacterial ribosomal protein bL19 family.</text>
</comment>
<name>RL19_CITK8</name>
<dbReference type="EMBL" id="CP000822">
    <property type="protein sequence ID" value="ABV15002.1"/>
    <property type="molecule type" value="Genomic_DNA"/>
</dbReference>
<dbReference type="RefSeq" id="WP_012134695.1">
    <property type="nucleotide sequence ID" value="NC_009792.1"/>
</dbReference>
<dbReference type="SMR" id="A8AND9"/>
<dbReference type="STRING" id="290338.CKO_03929"/>
<dbReference type="GeneID" id="93034197"/>
<dbReference type="KEGG" id="cko:CKO_03929"/>
<dbReference type="HOGENOM" id="CLU_103507_2_1_6"/>
<dbReference type="OrthoDB" id="9803541at2"/>
<dbReference type="Proteomes" id="UP000008148">
    <property type="component" value="Chromosome"/>
</dbReference>
<dbReference type="GO" id="GO:0022625">
    <property type="term" value="C:cytosolic large ribosomal subunit"/>
    <property type="evidence" value="ECO:0007669"/>
    <property type="project" value="TreeGrafter"/>
</dbReference>
<dbReference type="GO" id="GO:0003735">
    <property type="term" value="F:structural constituent of ribosome"/>
    <property type="evidence" value="ECO:0007669"/>
    <property type="project" value="InterPro"/>
</dbReference>
<dbReference type="GO" id="GO:0006412">
    <property type="term" value="P:translation"/>
    <property type="evidence" value="ECO:0007669"/>
    <property type="project" value="UniProtKB-UniRule"/>
</dbReference>
<dbReference type="FunFam" id="2.30.30.790:FF:000001">
    <property type="entry name" value="50S ribosomal protein L19"/>
    <property type="match status" value="1"/>
</dbReference>
<dbReference type="Gene3D" id="2.30.30.790">
    <property type="match status" value="1"/>
</dbReference>
<dbReference type="HAMAP" id="MF_00402">
    <property type="entry name" value="Ribosomal_bL19"/>
    <property type="match status" value="1"/>
</dbReference>
<dbReference type="InterPro" id="IPR001857">
    <property type="entry name" value="Ribosomal_bL19"/>
</dbReference>
<dbReference type="InterPro" id="IPR018257">
    <property type="entry name" value="Ribosomal_bL19_CS"/>
</dbReference>
<dbReference type="InterPro" id="IPR038657">
    <property type="entry name" value="Ribosomal_bL19_sf"/>
</dbReference>
<dbReference type="InterPro" id="IPR008991">
    <property type="entry name" value="Translation_prot_SH3-like_sf"/>
</dbReference>
<dbReference type="NCBIfam" id="TIGR01024">
    <property type="entry name" value="rplS_bact"/>
    <property type="match status" value="1"/>
</dbReference>
<dbReference type="PANTHER" id="PTHR15680:SF9">
    <property type="entry name" value="LARGE RIBOSOMAL SUBUNIT PROTEIN BL19M"/>
    <property type="match status" value="1"/>
</dbReference>
<dbReference type="PANTHER" id="PTHR15680">
    <property type="entry name" value="RIBOSOMAL PROTEIN L19"/>
    <property type="match status" value="1"/>
</dbReference>
<dbReference type="Pfam" id="PF01245">
    <property type="entry name" value="Ribosomal_L19"/>
    <property type="match status" value="1"/>
</dbReference>
<dbReference type="PIRSF" id="PIRSF002191">
    <property type="entry name" value="Ribosomal_L19"/>
    <property type="match status" value="1"/>
</dbReference>
<dbReference type="PRINTS" id="PR00061">
    <property type="entry name" value="RIBOSOMALL19"/>
</dbReference>
<dbReference type="SUPFAM" id="SSF50104">
    <property type="entry name" value="Translation proteins SH3-like domain"/>
    <property type="match status" value="1"/>
</dbReference>
<dbReference type="PROSITE" id="PS01015">
    <property type="entry name" value="RIBOSOMAL_L19"/>
    <property type="match status" value="1"/>
</dbReference>
<accession>A8AND9</accession>
<protein>
    <recommendedName>
        <fullName evidence="1">Large ribosomal subunit protein bL19</fullName>
    </recommendedName>
    <alternativeName>
        <fullName evidence="2">50S ribosomal protein L19</fullName>
    </alternativeName>
</protein>
<reference key="1">
    <citation type="submission" date="2007-08" db="EMBL/GenBank/DDBJ databases">
        <authorList>
            <consortium name="The Citrobacter koseri Genome Sequencing Project"/>
            <person name="McClelland M."/>
            <person name="Sanderson E.K."/>
            <person name="Porwollik S."/>
            <person name="Spieth J."/>
            <person name="Clifton W.S."/>
            <person name="Latreille P."/>
            <person name="Courtney L."/>
            <person name="Wang C."/>
            <person name="Pepin K."/>
            <person name="Bhonagiri V."/>
            <person name="Nash W."/>
            <person name="Johnson M."/>
            <person name="Thiruvilangam P."/>
            <person name="Wilson R."/>
        </authorList>
    </citation>
    <scope>NUCLEOTIDE SEQUENCE [LARGE SCALE GENOMIC DNA]</scope>
    <source>
        <strain>ATCC BAA-895 / CDC 4225-83 / SGSC4696</strain>
    </source>
</reference>
<organism>
    <name type="scientific">Citrobacter koseri (strain ATCC BAA-895 / CDC 4225-83 / SGSC4696)</name>
    <dbReference type="NCBI Taxonomy" id="290338"/>
    <lineage>
        <taxon>Bacteria</taxon>
        <taxon>Pseudomonadati</taxon>
        <taxon>Pseudomonadota</taxon>
        <taxon>Gammaproteobacteria</taxon>
        <taxon>Enterobacterales</taxon>
        <taxon>Enterobacteriaceae</taxon>
        <taxon>Citrobacter</taxon>
    </lineage>
</organism>
<sequence length="115" mass="13117">MSNIIKQLEQEQMKQDVPSFRPGDTVEVKVWVVEGSKKRLQAFEGVVIAIRNRGLHSAFTVRKISNGEGVERVFQTHSPVVDSIAVKRRGAVRKAKLYYLRERTGKAARIKERLN</sequence>
<keyword id="KW-1185">Reference proteome</keyword>
<keyword id="KW-0687">Ribonucleoprotein</keyword>
<keyword id="KW-0689">Ribosomal protein</keyword>
<evidence type="ECO:0000255" key="1">
    <source>
        <dbReference type="HAMAP-Rule" id="MF_00402"/>
    </source>
</evidence>
<evidence type="ECO:0000305" key="2"/>
<proteinExistence type="inferred from homology"/>